<feature type="chain" id="PRO_1000129582" description="Urocanate hydratase">
    <location>
        <begin position="1"/>
        <end position="549"/>
    </location>
</feature>
<feature type="active site" evidence="1">
    <location>
        <position position="404"/>
    </location>
</feature>
<feature type="binding site" evidence="1">
    <location>
        <begin position="46"/>
        <end position="47"/>
    </location>
    <ligand>
        <name>NAD(+)</name>
        <dbReference type="ChEBI" id="CHEBI:57540"/>
    </ligand>
</feature>
<feature type="binding site" evidence="1">
    <location>
        <position position="124"/>
    </location>
    <ligand>
        <name>NAD(+)</name>
        <dbReference type="ChEBI" id="CHEBI:57540"/>
    </ligand>
</feature>
<feature type="binding site" evidence="1">
    <location>
        <position position="190"/>
    </location>
    <ligand>
        <name>NAD(+)</name>
        <dbReference type="ChEBI" id="CHEBI:57540"/>
    </ligand>
</feature>
<feature type="binding site" evidence="1">
    <location>
        <position position="195"/>
    </location>
    <ligand>
        <name>NAD(+)</name>
        <dbReference type="ChEBI" id="CHEBI:57540"/>
    </ligand>
</feature>
<feature type="binding site" evidence="1">
    <location>
        <begin position="236"/>
        <end position="237"/>
    </location>
    <ligand>
        <name>NAD(+)</name>
        <dbReference type="ChEBI" id="CHEBI:57540"/>
    </ligand>
</feature>
<feature type="binding site" evidence="1">
    <location>
        <begin position="257"/>
        <end position="261"/>
    </location>
    <ligand>
        <name>NAD(+)</name>
        <dbReference type="ChEBI" id="CHEBI:57540"/>
    </ligand>
</feature>
<feature type="binding site" evidence="1">
    <location>
        <begin position="267"/>
        <end position="268"/>
    </location>
    <ligand>
        <name>NAD(+)</name>
        <dbReference type="ChEBI" id="CHEBI:57540"/>
    </ligand>
</feature>
<feature type="binding site" evidence="1">
    <location>
        <position position="316"/>
    </location>
    <ligand>
        <name>NAD(+)</name>
        <dbReference type="ChEBI" id="CHEBI:57540"/>
    </ligand>
</feature>
<feature type="binding site" evidence="1">
    <location>
        <position position="486"/>
    </location>
    <ligand>
        <name>NAD(+)</name>
        <dbReference type="ChEBI" id="CHEBI:57540"/>
    </ligand>
</feature>
<protein>
    <recommendedName>
        <fullName evidence="1">Urocanate hydratase</fullName>
        <shortName evidence="1">Urocanase</shortName>
        <ecNumber evidence="1">4.2.1.49</ecNumber>
    </recommendedName>
    <alternativeName>
        <fullName evidence="1">Imidazolonepropionate hydrolase</fullName>
    </alternativeName>
</protein>
<reference key="1">
    <citation type="submission" date="2008-01" db="EMBL/GenBank/DDBJ databases">
        <title>Complete sequence of Thermoanaerobacter pseudethanolicus 39E.</title>
        <authorList>
            <person name="Copeland A."/>
            <person name="Lucas S."/>
            <person name="Lapidus A."/>
            <person name="Barry K."/>
            <person name="Glavina del Rio T."/>
            <person name="Dalin E."/>
            <person name="Tice H."/>
            <person name="Pitluck S."/>
            <person name="Bruce D."/>
            <person name="Goodwin L."/>
            <person name="Saunders E."/>
            <person name="Brettin T."/>
            <person name="Detter J.C."/>
            <person name="Han C."/>
            <person name="Schmutz J."/>
            <person name="Larimer F."/>
            <person name="Land M."/>
            <person name="Hauser L."/>
            <person name="Kyrpides N."/>
            <person name="Lykidis A."/>
            <person name="Hemme C."/>
            <person name="Fields M.W."/>
            <person name="He Z."/>
            <person name="Zhou J."/>
            <person name="Richardson P."/>
        </authorList>
    </citation>
    <scope>NUCLEOTIDE SEQUENCE [LARGE SCALE GENOMIC DNA]</scope>
    <source>
        <strain>ATCC 33223 / DSM 2355 / 39E</strain>
    </source>
</reference>
<name>HUTU_THEP3</name>
<sequence>MSRVIRAPRGTTLHCKNWQIEAPYRTLMNNLDPEVAEDPANLIVYGGAGKAARNWEAFDKIIESLENLEEDETLLIQSGKPVGIFKTHTMAPRVLISNAMLVPAWANWENFWDLEAKGLTMYGQMTAGSWIYIGTQGIIEGTFETFAALAKKHFDGTLKGKFVLTAGLGGMSGAQPLAVTMLDGACLVVEVDRNRIQRRLDTKYLDVMTDNLDEALEMVLKAKEEGKPLSVGLVGNAADVHPELVRRGIIPDVVTDQTSAHDPLNGYVPNGMTLEEAFALRKSNPEEYIKRAKKAMAEHVSAMLEMQKRGAIAFDYGNNIRRMAYDEGVKEAFNIQGYVPEYIRDLFSEGKGPFRWIALSGDPEDIYKTDEKVLELFPEDKLLERWIRLAREKIKFQGLPARICWLGYGQRAEFGLAINEMVRKGELKAPIVIGRDHHDTGSVASPYRETEAMKDGSDAIADWPILNALLNTASGATWVSVHHGGGVGIGYSIHAGVVVCADGTKESDLRIERVLTSDPGSGVMRHADAGYEIAIRTAKEKGIKMPMLK</sequence>
<gene>
    <name evidence="1" type="primary">hutU</name>
    <name type="ordered locus">Teth39_1837</name>
</gene>
<organism>
    <name type="scientific">Thermoanaerobacter pseudethanolicus (strain ATCC 33223 / 39E)</name>
    <name type="common">Clostridium thermohydrosulfuricum</name>
    <dbReference type="NCBI Taxonomy" id="340099"/>
    <lineage>
        <taxon>Bacteria</taxon>
        <taxon>Bacillati</taxon>
        <taxon>Bacillota</taxon>
        <taxon>Clostridia</taxon>
        <taxon>Thermoanaerobacterales</taxon>
        <taxon>Thermoanaerobacteraceae</taxon>
        <taxon>Thermoanaerobacter</taxon>
    </lineage>
</organism>
<keyword id="KW-0963">Cytoplasm</keyword>
<keyword id="KW-0369">Histidine metabolism</keyword>
<keyword id="KW-0456">Lyase</keyword>
<keyword id="KW-0520">NAD</keyword>
<keyword id="KW-1185">Reference proteome</keyword>
<dbReference type="EC" id="4.2.1.49" evidence="1"/>
<dbReference type="EMBL" id="CP000924">
    <property type="protein sequence ID" value="ABY95473.1"/>
    <property type="molecule type" value="Genomic_DNA"/>
</dbReference>
<dbReference type="RefSeq" id="WP_003869236.1">
    <property type="nucleotide sequence ID" value="NC_010321.1"/>
</dbReference>
<dbReference type="SMR" id="B0KCB9"/>
<dbReference type="STRING" id="340099.Teth39_1837"/>
<dbReference type="KEGG" id="tpd:Teth39_1837"/>
<dbReference type="eggNOG" id="COG2987">
    <property type="taxonomic scope" value="Bacteria"/>
</dbReference>
<dbReference type="HOGENOM" id="CLU_018868_0_1_9"/>
<dbReference type="UniPathway" id="UPA00379">
    <property type="reaction ID" value="UER00550"/>
</dbReference>
<dbReference type="Proteomes" id="UP000002156">
    <property type="component" value="Chromosome"/>
</dbReference>
<dbReference type="GO" id="GO:0005737">
    <property type="term" value="C:cytoplasm"/>
    <property type="evidence" value="ECO:0007669"/>
    <property type="project" value="UniProtKB-SubCell"/>
</dbReference>
<dbReference type="GO" id="GO:0016153">
    <property type="term" value="F:urocanate hydratase activity"/>
    <property type="evidence" value="ECO:0007669"/>
    <property type="project" value="UniProtKB-UniRule"/>
</dbReference>
<dbReference type="GO" id="GO:0019556">
    <property type="term" value="P:L-histidine catabolic process to glutamate and formamide"/>
    <property type="evidence" value="ECO:0007669"/>
    <property type="project" value="UniProtKB-UniPathway"/>
</dbReference>
<dbReference type="GO" id="GO:0019557">
    <property type="term" value="P:L-histidine catabolic process to glutamate and formate"/>
    <property type="evidence" value="ECO:0007669"/>
    <property type="project" value="UniProtKB-UniPathway"/>
</dbReference>
<dbReference type="FunFam" id="3.40.50.10730:FF:000001">
    <property type="entry name" value="Urocanate hydratase"/>
    <property type="match status" value="1"/>
</dbReference>
<dbReference type="Gene3D" id="3.40.50.10730">
    <property type="entry name" value="Urocanase like domains"/>
    <property type="match status" value="1"/>
</dbReference>
<dbReference type="Gene3D" id="3.40.1770.10">
    <property type="entry name" value="Urocanase superfamily"/>
    <property type="match status" value="1"/>
</dbReference>
<dbReference type="HAMAP" id="MF_00577">
    <property type="entry name" value="HutU"/>
    <property type="match status" value="1"/>
</dbReference>
<dbReference type="InterPro" id="IPR055351">
    <property type="entry name" value="Urocanase"/>
</dbReference>
<dbReference type="InterPro" id="IPR023637">
    <property type="entry name" value="Urocanase-like"/>
</dbReference>
<dbReference type="InterPro" id="IPR035401">
    <property type="entry name" value="Urocanase_C"/>
</dbReference>
<dbReference type="InterPro" id="IPR038364">
    <property type="entry name" value="Urocanase_central_sf"/>
</dbReference>
<dbReference type="InterPro" id="IPR023636">
    <property type="entry name" value="Urocanase_CS"/>
</dbReference>
<dbReference type="InterPro" id="IPR035400">
    <property type="entry name" value="Urocanase_N"/>
</dbReference>
<dbReference type="InterPro" id="IPR035085">
    <property type="entry name" value="Urocanase_Rossmann-like"/>
</dbReference>
<dbReference type="InterPro" id="IPR036190">
    <property type="entry name" value="Urocanase_sf"/>
</dbReference>
<dbReference type="NCBIfam" id="TIGR01228">
    <property type="entry name" value="hutU"/>
    <property type="match status" value="1"/>
</dbReference>
<dbReference type="NCBIfam" id="NF003820">
    <property type="entry name" value="PRK05414.1"/>
    <property type="match status" value="1"/>
</dbReference>
<dbReference type="PANTHER" id="PTHR12216">
    <property type="entry name" value="UROCANATE HYDRATASE"/>
    <property type="match status" value="1"/>
</dbReference>
<dbReference type="PANTHER" id="PTHR12216:SF4">
    <property type="entry name" value="UROCANATE HYDRATASE"/>
    <property type="match status" value="1"/>
</dbReference>
<dbReference type="Pfam" id="PF01175">
    <property type="entry name" value="Urocanase"/>
    <property type="match status" value="1"/>
</dbReference>
<dbReference type="Pfam" id="PF17392">
    <property type="entry name" value="Urocanase_C"/>
    <property type="match status" value="1"/>
</dbReference>
<dbReference type="Pfam" id="PF17391">
    <property type="entry name" value="Urocanase_N"/>
    <property type="match status" value="1"/>
</dbReference>
<dbReference type="PIRSF" id="PIRSF001423">
    <property type="entry name" value="Urocanate_hydrat"/>
    <property type="match status" value="1"/>
</dbReference>
<dbReference type="SUPFAM" id="SSF111326">
    <property type="entry name" value="Urocanase"/>
    <property type="match status" value="1"/>
</dbReference>
<dbReference type="PROSITE" id="PS01233">
    <property type="entry name" value="UROCANASE"/>
    <property type="match status" value="1"/>
</dbReference>
<evidence type="ECO:0000255" key="1">
    <source>
        <dbReference type="HAMAP-Rule" id="MF_00577"/>
    </source>
</evidence>
<proteinExistence type="inferred from homology"/>
<accession>B0KCB9</accession>
<comment type="function">
    <text evidence="1">Catalyzes the conversion of urocanate to 4-imidazolone-5-propionate.</text>
</comment>
<comment type="catalytic activity">
    <reaction evidence="1">
        <text>4-imidazolone-5-propanoate = trans-urocanate + H2O</text>
        <dbReference type="Rhea" id="RHEA:13101"/>
        <dbReference type="ChEBI" id="CHEBI:15377"/>
        <dbReference type="ChEBI" id="CHEBI:17771"/>
        <dbReference type="ChEBI" id="CHEBI:77893"/>
        <dbReference type="EC" id="4.2.1.49"/>
    </reaction>
</comment>
<comment type="cofactor">
    <cofactor evidence="1">
        <name>NAD(+)</name>
        <dbReference type="ChEBI" id="CHEBI:57540"/>
    </cofactor>
    <text evidence="1">Binds 1 NAD(+) per subunit.</text>
</comment>
<comment type="pathway">
    <text evidence="1">Amino-acid degradation; L-histidine degradation into L-glutamate; N-formimidoyl-L-glutamate from L-histidine: step 2/3.</text>
</comment>
<comment type="subcellular location">
    <subcellularLocation>
        <location evidence="1">Cytoplasm</location>
    </subcellularLocation>
</comment>
<comment type="similarity">
    <text evidence="1">Belongs to the urocanase family.</text>
</comment>